<keyword id="KW-0227">DNA damage</keyword>
<keyword id="KW-0234">DNA repair</keyword>
<keyword id="KW-1185">Reference proteome</keyword>
<gene>
    <name evidence="1" type="primary">mutL</name>
    <name type="ordered locus">Dred_1884</name>
</gene>
<feature type="chain" id="PRO_1000071505" description="DNA mismatch repair protein MutL">
    <location>
        <begin position="1"/>
        <end position="640"/>
    </location>
</feature>
<feature type="region of interest" description="Disordered" evidence="2">
    <location>
        <begin position="343"/>
        <end position="389"/>
    </location>
</feature>
<feature type="compositionally biased region" description="Basic and acidic residues" evidence="2">
    <location>
        <begin position="350"/>
        <end position="373"/>
    </location>
</feature>
<name>MUTL_DESRM</name>
<dbReference type="EMBL" id="CP000612">
    <property type="protein sequence ID" value="ABO50406.1"/>
    <property type="molecule type" value="Genomic_DNA"/>
</dbReference>
<dbReference type="RefSeq" id="WP_011878218.1">
    <property type="nucleotide sequence ID" value="NC_009253.1"/>
</dbReference>
<dbReference type="SMR" id="A4J5Q3"/>
<dbReference type="STRING" id="349161.Dred_1884"/>
<dbReference type="KEGG" id="drm:Dred_1884"/>
<dbReference type="eggNOG" id="COG0323">
    <property type="taxonomic scope" value="Bacteria"/>
</dbReference>
<dbReference type="HOGENOM" id="CLU_004131_4_1_9"/>
<dbReference type="OrthoDB" id="9763467at2"/>
<dbReference type="Proteomes" id="UP000001556">
    <property type="component" value="Chromosome"/>
</dbReference>
<dbReference type="GO" id="GO:0032300">
    <property type="term" value="C:mismatch repair complex"/>
    <property type="evidence" value="ECO:0007669"/>
    <property type="project" value="InterPro"/>
</dbReference>
<dbReference type="GO" id="GO:0005524">
    <property type="term" value="F:ATP binding"/>
    <property type="evidence" value="ECO:0007669"/>
    <property type="project" value="InterPro"/>
</dbReference>
<dbReference type="GO" id="GO:0016887">
    <property type="term" value="F:ATP hydrolysis activity"/>
    <property type="evidence" value="ECO:0007669"/>
    <property type="project" value="InterPro"/>
</dbReference>
<dbReference type="GO" id="GO:0140664">
    <property type="term" value="F:ATP-dependent DNA damage sensor activity"/>
    <property type="evidence" value="ECO:0007669"/>
    <property type="project" value="InterPro"/>
</dbReference>
<dbReference type="GO" id="GO:0030983">
    <property type="term" value="F:mismatched DNA binding"/>
    <property type="evidence" value="ECO:0007669"/>
    <property type="project" value="InterPro"/>
</dbReference>
<dbReference type="GO" id="GO:0006298">
    <property type="term" value="P:mismatch repair"/>
    <property type="evidence" value="ECO:0007669"/>
    <property type="project" value="UniProtKB-UniRule"/>
</dbReference>
<dbReference type="CDD" id="cd16926">
    <property type="entry name" value="HATPase_MutL-MLH-PMS-like"/>
    <property type="match status" value="1"/>
</dbReference>
<dbReference type="CDD" id="cd00782">
    <property type="entry name" value="MutL_Trans"/>
    <property type="match status" value="1"/>
</dbReference>
<dbReference type="FunFam" id="3.30.565.10:FF:000003">
    <property type="entry name" value="DNA mismatch repair endonuclease MutL"/>
    <property type="match status" value="1"/>
</dbReference>
<dbReference type="Gene3D" id="3.30.230.10">
    <property type="match status" value="1"/>
</dbReference>
<dbReference type="Gene3D" id="3.30.565.10">
    <property type="entry name" value="Histidine kinase-like ATPase, C-terminal domain"/>
    <property type="match status" value="1"/>
</dbReference>
<dbReference type="Gene3D" id="3.30.1540.20">
    <property type="entry name" value="MutL, C-terminal domain, dimerisation subdomain"/>
    <property type="match status" value="1"/>
</dbReference>
<dbReference type="Gene3D" id="3.30.1370.100">
    <property type="entry name" value="MutL, C-terminal domain, regulatory subdomain"/>
    <property type="match status" value="1"/>
</dbReference>
<dbReference type="HAMAP" id="MF_00149">
    <property type="entry name" value="DNA_mis_repair"/>
    <property type="match status" value="1"/>
</dbReference>
<dbReference type="InterPro" id="IPR014762">
    <property type="entry name" value="DNA_mismatch_repair_CS"/>
</dbReference>
<dbReference type="InterPro" id="IPR020667">
    <property type="entry name" value="DNA_mismatch_repair_MutL"/>
</dbReference>
<dbReference type="InterPro" id="IPR013507">
    <property type="entry name" value="DNA_mismatch_S5_2-like"/>
</dbReference>
<dbReference type="InterPro" id="IPR036890">
    <property type="entry name" value="HATPase_C_sf"/>
</dbReference>
<dbReference type="InterPro" id="IPR002099">
    <property type="entry name" value="MutL/Mlh/PMS"/>
</dbReference>
<dbReference type="InterPro" id="IPR038973">
    <property type="entry name" value="MutL/Mlh/Pms-like"/>
</dbReference>
<dbReference type="InterPro" id="IPR014790">
    <property type="entry name" value="MutL_C"/>
</dbReference>
<dbReference type="InterPro" id="IPR042120">
    <property type="entry name" value="MutL_C_dimsub"/>
</dbReference>
<dbReference type="InterPro" id="IPR042121">
    <property type="entry name" value="MutL_C_regsub"/>
</dbReference>
<dbReference type="InterPro" id="IPR037198">
    <property type="entry name" value="MutL_C_sf"/>
</dbReference>
<dbReference type="InterPro" id="IPR020568">
    <property type="entry name" value="Ribosomal_Su5_D2-typ_SF"/>
</dbReference>
<dbReference type="InterPro" id="IPR014721">
    <property type="entry name" value="Ribsml_uS5_D2-typ_fold_subgr"/>
</dbReference>
<dbReference type="NCBIfam" id="TIGR00585">
    <property type="entry name" value="mutl"/>
    <property type="match status" value="1"/>
</dbReference>
<dbReference type="PANTHER" id="PTHR10073">
    <property type="entry name" value="DNA MISMATCH REPAIR PROTEIN MLH, PMS, MUTL"/>
    <property type="match status" value="1"/>
</dbReference>
<dbReference type="PANTHER" id="PTHR10073:SF12">
    <property type="entry name" value="DNA MISMATCH REPAIR PROTEIN MLH1"/>
    <property type="match status" value="1"/>
</dbReference>
<dbReference type="Pfam" id="PF01119">
    <property type="entry name" value="DNA_mis_repair"/>
    <property type="match status" value="1"/>
</dbReference>
<dbReference type="Pfam" id="PF13589">
    <property type="entry name" value="HATPase_c_3"/>
    <property type="match status" value="1"/>
</dbReference>
<dbReference type="Pfam" id="PF08676">
    <property type="entry name" value="MutL_C"/>
    <property type="match status" value="1"/>
</dbReference>
<dbReference type="SMART" id="SM01340">
    <property type="entry name" value="DNA_mis_repair"/>
    <property type="match status" value="1"/>
</dbReference>
<dbReference type="SMART" id="SM00853">
    <property type="entry name" value="MutL_C"/>
    <property type="match status" value="1"/>
</dbReference>
<dbReference type="SUPFAM" id="SSF55874">
    <property type="entry name" value="ATPase domain of HSP90 chaperone/DNA topoisomerase II/histidine kinase"/>
    <property type="match status" value="1"/>
</dbReference>
<dbReference type="SUPFAM" id="SSF118116">
    <property type="entry name" value="DNA mismatch repair protein MutL"/>
    <property type="match status" value="1"/>
</dbReference>
<dbReference type="SUPFAM" id="SSF54211">
    <property type="entry name" value="Ribosomal protein S5 domain 2-like"/>
    <property type="match status" value="1"/>
</dbReference>
<dbReference type="PROSITE" id="PS00058">
    <property type="entry name" value="DNA_MISMATCH_REPAIR_1"/>
    <property type="match status" value="1"/>
</dbReference>
<comment type="function">
    <text evidence="1">This protein is involved in the repair of mismatches in DNA. It is required for dam-dependent methyl-directed DNA mismatch repair. May act as a 'molecular matchmaker', a protein that promotes the formation of a stable complex between two or more DNA-binding proteins in an ATP-dependent manner without itself being part of a final effector complex.</text>
</comment>
<comment type="similarity">
    <text evidence="1">Belongs to the DNA mismatch repair MutL/HexB family.</text>
</comment>
<evidence type="ECO:0000255" key="1">
    <source>
        <dbReference type="HAMAP-Rule" id="MF_00149"/>
    </source>
</evidence>
<evidence type="ECO:0000256" key="2">
    <source>
        <dbReference type="SAM" id="MobiDB-lite"/>
    </source>
</evidence>
<reference key="1">
    <citation type="submission" date="2007-03" db="EMBL/GenBank/DDBJ databases">
        <title>Complete sequence of Desulfotomaculum reducens MI-1.</title>
        <authorList>
            <consortium name="US DOE Joint Genome Institute"/>
            <person name="Copeland A."/>
            <person name="Lucas S."/>
            <person name="Lapidus A."/>
            <person name="Barry K."/>
            <person name="Detter J.C."/>
            <person name="Glavina del Rio T."/>
            <person name="Hammon N."/>
            <person name="Israni S."/>
            <person name="Dalin E."/>
            <person name="Tice H."/>
            <person name="Pitluck S."/>
            <person name="Sims D."/>
            <person name="Brettin T."/>
            <person name="Bruce D."/>
            <person name="Han C."/>
            <person name="Tapia R."/>
            <person name="Schmutz J."/>
            <person name="Larimer F."/>
            <person name="Land M."/>
            <person name="Hauser L."/>
            <person name="Kyrpides N."/>
            <person name="Kim E."/>
            <person name="Tebo B.M."/>
            <person name="Richardson P."/>
        </authorList>
    </citation>
    <scope>NUCLEOTIDE SEQUENCE [LARGE SCALE GENOMIC DNA]</scope>
    <source>
        <strain>ATCC BAA-1160 / DSM 100696 / MI-1</strain>
    </source>
</reference>
<sequence length="640" mass="70735">MSNITILDEATANKIAAGEVVERPVSVVKELVENSLDAGANRISVELTQGGITGIKVVDNGYGMPAEDVQLCFLRHATSKIKRAEDLNSILTLGFRGEALPSIAAVSKVTLTTRTEDELAGTTMQIEGGYMQNVVPTGCPVGTIIEIKDLFFNTPARRKFLKTANAETSQVSDLITRLAMARPDVRFELRSGNRVLFSSPGTGSLKDTAAVIFGLDNVRSMLEIGYQGKLLSVAGLISKPVLTRASRHYQNFFINGRYIRSGFLSSILQQAYDTLIPAGRFPIAILHIDIDPTQVDVNVHPTKMEIRMAREGEIQEELLAALSDSLNVPTAITGLWEIMPGRTKNTATDQRAENLEVKPDSKEKELQPKESQHPRLVACDLPSGKIMPPRHDQEQLHFSSRRIAPVRGKNSLLPDEGSSINREEIPPVVDVKEQQLKENPNTYQPAETLGFPVLVPAGQVPPTYVLAHGEGGLYIIDQHAAHERVLYEKYLYLLGNYVEAQMLLEPLTLEIPHHEAQLIIKHIVDFNELGFILEHFGGDTFLLRGVPTNAITEPKEVFLDLLARLQENPSQKVEKNLVLDHLAAAMACRDAVKSGQHFSAVETKALLDGLARCQKPYTCPHGRPTLIQISQEELKKRFKR</sequence>
<proteinExistence type="inferred from homology"/>
<accession>A4J5Q3</accession>
<protein>
    <recommendedName>
        <fullName evidence="1">DNA mismatch repair protein MutL</fullName>
    </recommendedName>
</protein>
<organism>
    <name type="scientific">Desulforamulus reducens (strain ATCC BAA-1160 / DSM 100696 / MI-1)</name>
    <name type="common">Desulfotomaculum reducens</name>
    <dbReference type="NCBI Taxonomy" id="349161"/>
    <lineage>
        <taxon>Bacteria</taxon>
        <taxon>Bacillati</taxon>
        <taxon>Bacillota</taxon>
        <taxon>Clostridia</taxon>
        <taxon>Eubacteriales</taxon>
        <taxon>Peptococcaceae</taxon>
        <taxon>Desulforamulus</taxon>
    </lineage>
</organism>